<name>HYAL_TITST</name>
<proteinExistence type="evidence at protein level"/>
<evidence type="ECO:0000269" key="1">
    <source>
    </source>
</evidence>
<evidence type="ECO:0000305" key="2"/>
<dbReference type="EC" id="3.2.1.35"/>
<dbReference type="GO" id="GO:0005576">
    <property type="term" value="C:extracellular region"/>
    <property type="evidence" value="ECO:0007669"/>
    <property type="project" value="UniProtKB-SubCell"/>
</dbReference>
<dbReference type="GO" id="GO:0004415">
    <property type="term" value="F:hyalurononglucosaminidase activity"/>
    <property type="evidence" value="ECO:0007669"/>
    <property type="project" value="UniProtKB-EC"/>
</dbReference>
<reference key="1">
    <citation type="journal article" date="2007" name="Comp. Biochem. Physiol.">
        <title>Proteomic analysis of the venom from the scorpion Tityus stigmurus: biochemical and physiological comparison with other Tityus species.</title>
        <authorList>
            <person name="Batista C.V.F."/>
            <person name="Roman-Gonzalez S.A."/>
            <person name="Salas-Castillo S.P."/>
            <person name="Zamudio F.Z."/>
            <person name="Gomez-Lagunas F."/>
            <person name="Possani L.D."/>
        </authorList>
    </citation>
    <scope>PROTEIN SEQUENCE</scope>
    <scope>FUNCTION</scope>
    <scope>MASS SPECTROMETRY</scope>
    <source>
        <tissue>Venom</tissue>
    </source>
</reference>
<protein>
    <recommendedName>
        <fullName>Hyaluronidase</fullName>
        <ecNumber>3.2.1.35</ecNumber>
    </recommendedName>
    <alternativeName>
        <fullName>Cysteine-rich venom protein</fullName>
        <shortName>CRVP</shortName>
    </alternativeName>
    <alternativeName>
        <fullName>Hyaluronoglucosaminidase A</fullName>
    </alternativeName>
</protein>
<organism>
    <name type="scientific">Tityus stigmurus</name>
    <name type="common">Brazilian scorpion</name>
    <dbReference type="NCBI Taxonomy" id="50344"/>
    <lineage>
        <taxon>Eukaryota</taxon>
        <taxon>Metazoa</taxon>
        <taxon>Ecdysozoa</taxon>
        <taxon>Arthropoda</taxon>
        <taxon>Chelicerata</taxon>
        <taxon>Arachnida</taxon>
        <taxon>Scorpiones</taxon>
        <taxon>Buthida</taxon>
        <taxon>Buthoidea</taxon>
        <taxon>Buthidae</taxon>
        <taxon>Tityus</taxon>
    </lineage>
</organism>
<feature type="peptide" id="PRO_0000366111" description="Hyaluronidase">
    <location>
        <begin position="1"/>
        <end position="24" status="greater than"/>
    </location>
</feature>
<feature type="non-terminal residue">
    <location>
        <position position="24"/>
    </location>
</feature>
<accession>P0C8X3</accession>
<keyword id="KW-0903">Direct protein sequencing</keyword>
<keyword id="KW-0378">Hydrolase</keyword>
<keyword id="KW-0964">Secreted</keyword>
<comment type="function">
    <text evidence="1">Possesses high activity against hyaluronan in vitro.</text>
</comment>
<comment type="catalytic activity">
    <reaction>
        <text>Random hydrolysis of (1-&gt;4)-linkages between N-acetyl-beta-D-glucosamine and D-glucuronate residues in hyaluronate.</text>
        <dbReference type="EC" id="3.2.1.35"/>
    </reaction>
</comment>
<comment type="subcellular location">
    <subcellularLocation>
        <location>Secreted</location>
    </subcellularLocation>
</comment>
<comment type="tissue specificity">
    <text>Expressed by the venom gland.</text>
</comment>
<comment type="mass spectrometry"/>
<comment type="similarity">
    <text evidence="2">Belongs to the CRISP family.</text>
</comment>
<sequence>EHPALYRRYSKEHTFCKTKNQXCN</sequence>